<organism>
    <name type="scientific">Drosophila melanogaster</name>
    <name type="common">Fruit fly</name>
    <dbReference type="NCBI Taxonomy" id="7227"/>
    <lineage>
        <taxon>Eukaryota</taxon>
        <taxon>Metazoa</taxon>
        <taxon>Ecdysozoa</taxon>
        <taxon>Arthropoda</taxon>
        <taxon>Hexapoda</taxon>
        <taxon>Insecta</taxon>
        <taxon>Pterygota</taxon>
        <taxon>Neoptera</taxon>
        <taxon>Endopterygota</taxon>
        <taxon>Diptera</taxon>
        <taxon>Brachycera</taxon>
        <taxon>Muscomorpha</taxon>
        <taxon>Ephydroidea</taxon>
        <taxon>Drosophilidae</taxon>
        <taxon>Drosophila</taxon>
        <taxon>Sophophora</taxon>
    </lineage>
</organism>
<proteinExistence type="evidence at protein level"/>
<dbReference type="EMBL" id="X89246">
    <property type="protein sequence ID" value="CAA61534.1"/>
    <property type="molecule type" value="mRNA"/>
</dbReference>
<dbReference type="EMBL" id="Y15606">
    <property type="protein sequence ID" value="CAA75690.1"/>
    <property type="molecule type" value="Genomic_DNA"/>
</dbReference>
<dbReference type="EMBL" id="AJ002073">
    <property type="protein sequence ID" value="CAA05172.1"/>
    <property type="molecule type" value="mRNA"/>
</dbReference>
<dbReference type="EMBL" id="AE014134">
    <property type="protein sequence ID" value="AAF53914.1"/>
    <property type="molecule type" value="Genomic_DNA"/>
</dbReference>
<dbReference type="EMBL" id="U36762">
    <property type="protein sequence ID" value="AAC46926.1"/>
    <property type="molecule type" value="mRNA"/>
</dbReference>
<dbReference type="RefSeq" id="NP_477119.1">
    <property type="nucleotide sequence ID" value="NM_057771.4"/>
</dbReference>
<dbReference type="PDB" id="1PDU">
    <property type="method" value="X-ray"/>
    <property type="resolution" value="2.30 A"/>
    <property type="chains" value="A/B=842-1073"/>
</dbReference>
<dbReference type="PDBsum" id="1PDU"/>
<dbReference type="SMR" id="P49869"/>
<dbReference type="BioGRID" id="61295">
    <property type="interactions" value="10"/>
</dbReference>
<dbReference type="DIP" id="DIP-929N"/>
<dbReference type="FunCoup" id="P49869">
    <property type="interactions" value="8"/>
</dbReference>
<dbReference type="IntAct" id="P49869">
    <property type="interactions" value="8"/>
</dbReference>
<dbReference type="STRING" id="7227.FBpp0080927"/>
<dbReference type="GlyGen" id="P49869">
    <property type="glycosylation" value="1 site"/>
</dbReference>
<dbReference type="PaxDb" id="7227-FBpp0080927"/>
<dbReference type="EnsemblMetazoa" id="FBtr0081397">
    <property type="protein sequence ID" value="FBpp0080927"/>
    <property type="gene ID" value="FBgn0014859"/>
</dbReference>
<dbReference type="GeneID" id="35332"/>
<dbReference type="KEGG" id="dme:Dmel_CG1864"/>
<dbReference type="AGR" id="FB:FBgn0014859"/>
<dbReference type="CTD" id="35332"/>
<dbReference type="FlyBase" id="FBgn0014859">
    <property type="gene designation" value="Hr38"/>
</dbReference>
<dbReference type="VEuPathDB" id="VectorBase:FBgn0014859"/>
<dbReference type="eggNOG" id="KOG4217">
    <property type="taxonomic scope" value="Eukaryota"/>
</dbReference>
<dbReference type="GeneTree" id="ENSGT00950000183038"/>
<dbReference type="InParanoid" id="P49869"/>
<dbReference type="OrthoDB" id="5952118at2759"/>
<dbReference type="Reactome" id="R-DME-198693">
    <property type="pathway name" value="AKT phosphorylates targets in the nucleus"/>
</dbReference>
<dbReference type="Reactome" id="R-DME-383280">
    <property type="pathway name" value="Nuclear Receptor transcription pathway"/>
</dbReference>
<dbReference type="SignaLink" id="P49869"/>
<dbReference type="BioGRID-ORCS" id="35332">
    <property type="hits" value="0 hits in 3 CRISPR screens"/>
</dbReference>
<dbReference type="ChiTaRS" id="Hr38">
    <property type="organism name" value="fly"/>
</dbReference>
<dbReference type="EvolutionaryTrace" id="P49869"/>
<dbReference type="GenomeRNAi" id="35332"/>
<dbReference type="PRO" id="PR:P49869"/>
<dbReference type="Proteomes" id="UP000000803">
    <property type="component" value="Chromosome 2L"/>
</dbReference>
<dbReference type="Bgee" id="FBgn0014859">
    <property type="expression patterns" value="Expressed in mechanosensory neuron (Drosophila) in insect leg and 186 other cell types or tissues"/>
</dbReference>
<dbReference type="ExpressionAtlas" id="P49869">
    <property type="expression patterns" value="baseline and differential"/>
</dbReference>
<dbReference type="GO" id="GO:0005737">
    <property type="term" value="C:cytoplasm"/>
    <property type="evidence" value="ECO:0000315"/>
    <property type="project" value="CAFA"/>
</dbReference>
<dbReference type="GO" id="GO:0005634">
    <property type="term" value="C:nucleus"/>
    <property type="evidence" value="ECO:0000315"/>
    <property type="project" value="CAFA"/>
</dbReference>
<dbReference type="GO" id="GO:0005667">
    <property type="term" value="C:transcription regulator complex"/>
    <property type="evidence" value="ECO:0000318"/>
    <property type="project" value="GO_Central"/>
</dbReference>
<dbReference type="GO" id="GO:0001046">
    <property type="term" value="F:core promoter sequence-specific DNA binding"/>
    <property type="evidence" value="ECO:0000315"/>
    <property type="project" value="CAFA"/>
</dbReference>
<dbReference type="GO" id="GO:0000981">
    <property type="term" value="F:DNA-binding transcription factor activity, RNA polymerase II-specific"/>
    <property type="evidence" value="ECO:0000318"/>
    <property type="project" value="GO_Central"/>
</dbReference>
<dbReference type="GO" id="GO:0035259">
    <property type="term" value="F:nuclear glucocorticoid receptor binding"/>
    <property type="evidence" value="ECO:0000318"/>
    <property type="project" value="GO_Central"/>
</dbReference>
<dbReference type="GO" id="GO:0004879">
    <property type="term" value="F:nuclear receptor activity"/>
    <property type="evidence" value="ECO:0000303"/>
    <property type="project" value="FlyBase"/>
</dbReference>
<dbReference type="GO" id="GO:0046982">
    <property type="term" value="F:protein heterodimerization activity"/>
    <property type="evidence" value="ECO:0000315"/>
    <property type="project" value="CAFA"/>
</dbReference>
<dbReference type="GO" id="GO:0000978">
    <property type="term" value="F:RNA polymerase II cis-regulatory region sequence-specific DNA binding"/>
    <property type="evidence" value="ECO:0000318"/>
    <property type="project" value="GO_Central"/>
</dbReference>
<dbReference type="GO" id="GO:0000977">
    <property type="term" value="F:RNA polymerase II transcription regulatory region sequence-specific DNA binding"/>
    <property type="evidence" value="ECO:0000314"/>
    <property type="project" value="FlyBase"/>
</dbReference>
<dbReference type="GO" id="GO:0043565">
    <property type="term" value="F:sequence-specific DNA binding"/>
    <property type="evidence" value="ECO:0000315"/>
    <property type="project" value="CAFA"/>
</dbReference>
<dbReference type="GO" id="GO:0005102">
    <property type="term" value="F:signaling receptor binding"/>
    <property type="evidence" value="ECO:0000353"/>
    <property type="project" value="CAFA"/>
</dbReference>
<dbReference type="GO" id="GO:0008270">
    <property type="term" value="F:zinc ion binding"/>
    <property type="evidence" value="ECO:0007669"/>
    <property type="project" value="UniProtKB-KW"/>
</dbReference>
<dbReference type="GO" id="GO:0071376">
    <property type="term" value="P:cellular response to corticotropin-releasing hormone stimulus"/>
    <property type="evidence" value="ECO:0000318"/>
    <property type="project" value="GO_Central"/>
</dbReference>
<dbReference type="GO" id="GO:0042335">
    <property type="term" value="P:cuticle development"/>
    <property type="evidence" value="ECO:0000315"/>
    <property type="project" value="FlyBase"/>
</dbReference>
<dbReference type="GO" id="GO:0045944">
    <property type="term" value="P:positive regulation of transcription by RNA polymerase II"/>
    <property type="evidence" value="ECO:0000250"/>
    <property type="project" value="FlyBase"/>
</dbReference>
<dbReference type="GO" id="GO:0048082">
    <property type="term" value="P:regulation of adult chitin-containing cuticle pigmentation"/>
    <property type="evidence" value="ECO:0000316"/>
    <property type="project" value="FlyBase"/>
</dbReference>
<dbReference type="GO" id="GO:0006357">
    <property type="term" value="P:regulation of transcription by RNA polymerase II"/>
    <property type="evidence" value="ECO:0000318"/>
    <property type="project" value="GO_Central"/>
</dbReference>
<dbReference type="CDD" id="cd06969">
    <property type="entry name" value="NR_DBD_NGFI-B"/>
    <property type="match status" value="1"/>
</dbReference>
<dbReference type="CDD" id="cd07072">
    <property type="entry name" value="NR_LBD_DHR38_like"/>
    <property type="match status" value="1"/>
</dbReference>
<dbReference type="DisProt" id="DP00594"/>
<dbReference type="FunFam" id="1.10.565.10:FF:000008">
    <property type="entry name" value="Nuclear receptor subfamily 4 group A member 1"/>
    <property type="match status" value="1"/>
</dbReference>
<dbReference type="FunFam" id="3.30.50.10:FF:000009">
    <property type="entry name" value="nuclear receptor subfamily 4 group A member 2"/>
    <property type="match status" value="1"/>
</dbReference>
<dbReference type="Gene3D" id="3.30.50.10">
    <property type="entry name" value="Erythroid Transcription Factor GATA-1, subunit A"/>
    <property type="match status" value="1"/>
</dbReference>
<dbReference type="Gene3D" id="1.10.565.10">
    <property type="entry name" value="Retinoid X Receptor"/>
    <property type="match status" value="1"/>
</dbReference>
<dbReference type="InterPro" id="IPR035500">
    <property type="entry name" value="NHR-like_dom_sf"/>
</dbReference>
<dbReference type="InterPro" id="IPR000536">
    <property type="entry name" value="Nucl_hrmn_rcpt_lig-bd"/>
</dbReference>
<dbReference type="InterPro" id="IPR001723">
    <property type="entry name" value="Nuclear_hrmn_rcpt"/>
</dbReference>
<dbReference type="InterPro" id="IPR001628">
    <property type="entry name" value="Znf_hrmn_rcpt"/>
</dbReference>
<dbReference type="InterPro" id="IPR013088">
    <property type="entry name" value="Znf_NHR/GATA"/>
</dbReference>
<dbReference type="PANTHER" id="PTHR24085">
    <property type="entry name" value="NUCLEAR HORMONE RECEPTOR"/>
    <property type="match status" value="1"/>
</dbReference>
<dbReference type="PANTHER" id="PTHR24085:SF4">
    <property type="entry name" value="NUCLEAR HORMONE RECEPTOR HR38-RELATED"/>
    <property type="match status" value="1"/>
</dbReference>
<dbReference type="Pfam" id="PF00104">
    <property type="entry name" value="Hormone_recep"/>
    <property type="match status" value="1"/>
</dbReference>
<dbReference type="Pfam" id="PF00105">
    <property type="entry name" value="zf-C4"/>
    <property type="match status" value="1"/>
</dbReference>
<dbReference type="PRINTS" id="PR00398">
    <property type="entry name" value="STRDHORMONER"/>
</dbReference>
<dbReference type="PRINTS" id="PR00047">
    <property type="entry name" value="STROIDFINGER"/>
</dbReference>
<dbReference type="SMART" id="SM00430">
    <property type="entry name" value="HOLI"/>
    <property type="match status" value="1"/>
</dbReference>
<dbReference type="SMART" id="SM00399">
    <property type="entry name" value="ZnF_C4"/>
    <property type="match status" value="1"/>
</dbReference>
<dbReference type="SUPFAM" id="SSF57716">
    <property type="entry name" value="Glucocorticoid receptor-like (DNA-binding domain)"/>
    <property type="match status" value="1"/>
</dbReference>
<dbReference type="SUPFAM" id="SSF48508">
    <property type="entry name" value="Nuclear receptor ligand-binding domain"/>
    <property type="match status" value="1"/>
</dbReference>
<dbReference type="PROSITE" id="PS51843">
    <property type="entry name" value="NR_LBD"/>
    <property type="match status" value="1"/>
</dbReference>
<dbReference type="PROSITE" id="PS00031">
    <property type="entry name" value="NUCLEAR_REC_DBD_1"/>
    <property type="match status" value="1"/>
</dbReference>
<dbReference type="PROSITE" id="PS51030">
    <property type="entry name" value="NUCLEAR_REC_DBD_2"/>
    <property type="match status" value="1"/>
</dbReference>
<protein>
    <recommendedName>
        <fullName>Probable nuclear hormone receptor HR38</fullName>
        <shortName>dHR38</shortName>
    </recommendedName>
    <alternativeName>
        <fullName>Nuclear receptor subfamily 4 group A member 4</fullName>
    </alternativeName>
</protein>
<comment type="function">
    <text>Binds to NGFI-B response elements. Plays an important role in late stages of epidermal metamorphosis.</text>
</comment>
<comment type="subunit">
    <text>Forms a heterodimer with USP.</text>
</comment>
<comment type="subcellular location">
    <subcellularLocation>
        <location>Nucleus</location>
    </subcellularLocation>
</comment>
<comment type="alternative products">
    <event type="alternative splicing"/>
    <isoform>
        <id>P49869-1</id>
        <name>Long</name>
        <sequence type="displayed"/>
    </isoform>
    <isoform>
        <id>P49869-2</id>
        <name>Short</name>
        <sequence type="described" ref="VSP_003714"/>
    </isoform>
</comment>
<comment type="tissue specificity">
    <text evidence="4">Ubiquitously expressed in preblastoderm embryos, specifically in central nervous system and intestinal tract. Highly expressed in third instar larval imaginal disks and brain complexes, but not in ovaries.</text>
</comment>
<comment type="developmental stage">
    <text>Low levels in 0-8 hours embryos and adults. Higher in late embryogenesis and during larval and pupal stages. Short isoform is enriched in pupae and adults, long isoform in larvae.</text>
</comment>
<comment type="similarity">
    <text evidence="6">Belongs to the nuclear hormone receptor family. NR4 subfamily.</text>
</comment>
<name>HR38_DROME</name>
<accession>P49869</accession>
<accession>O18383</accession>
<accession>Q9VIK4</accession>
<reference key="1">
    <citation type="journal article" date="1995" name="Proc. Natl. Acad. Sci. U.S.A.">
        <title>Drosophila hormone receptor 38: a second partner for Drosophila USP suggests an unexpected role for nuclear receptors of the nerve growth factor-induced protein B type.</title>
        <authorList>
            <person name="Sutherland J.D."/>
            <person name="Kozlova T."/>
            <person name="Tzertzinis G."/>
            <person name="Kafatos F.C."/>
        </authorList>
    </citation>
    <scope>NUCLEOTIDE SEQUENCE [MRNA] (ISOFORM SHORT)</scope>
    <source>
        <tissue>Larva</tissue>
    </source>
</reference>
<reference key="2">
    <citation type="journal article" date="1998" name="Arch. Insect Biochem. Physiol.">
        <title>Genomic organization of DHR38 gene in Drosophila: presence of Alu-like repeat in a translated exon and expression during embryonic development.</title>
        <authorList>
            <person name="Komonyi O."/>
            <person name="Mink M."/>
            <person name="Csiha J."/>
            <person name="Maroy P."/>
        </authorList>
    </citation>
    <scope>NUCLEOTIDE SEQUENCE [GENOMIC DNA] (ISOFORM SHORT)</scope>
    <scope>TISSUE SPECIFICITY</scope>
</reference>
<reference key="3">
    <citation type="journal article" date="1998" name="Genetics">
        <title>Drosophila hormone receptor 38 functions in metamorphosis: a role in adult cuticle formation.</title>
        <authorList>
            <person name="Kozlova T."/>
            <person name="Pokholkova G.V."/>
            <person name="Tzertzinis G."/>
            <person name="Sutherland J.D."/>
            <person name="Zhimulev I.F."/>
            <person name="Kafatos F.C."/>
        </authorList>
    </citation>
    <scope>NUCLEOTIDE SEQUENCE [MRNA] (ISOFORM LONG)</scope>
    <scope>CHARACTERIZATION</scope>
    <source>
        <tissue>Larva</tissue>
    </source>
</reference>
<reference key="4">
    <citation type="journal article" date="2000" name="Science">
        <title>The genome sequence of Drosophila melanogaster.</title>
        <authorList>
            <person name="Adams M.D."/>
            <person name="Celniker S.E."/>
            <person name="Holt R.A."/>
            <person name="Evans C.A."/>
            <person name="Gocayne J.D."/>
            <person name="Amanatides P.G."/>
            <person name="Scherer S.E."/>
            <person name="Li P.W."/>
            <person name="Hoskins R.A."/>
            <person name="Galle R.F."/>
            <person name="George R.A."/>
            <person name="Lewis S.E."/>
            <person name="Richards S."/>
            <person name="Ashburner M."/>
            <person name="Henderson S.N."/>
            <person name="Sutton G.G."/>
            <person name="Wortman J.R."/>
            <person name="Yandell M.D."/>
            <person name="Zhang Q."/>
            <person name="Chen L.X."/>
            <person name="Brandon R.C."/>
            <person name="Rogers Y.-H.C."/>
            <person name="Blazej R.G."/>
            <person name="Champe M."/>
            <person name="Pfeiffer B.D."/>
            <person name="Wan K.H."/>
            <person name="Doyle C."/>
            <person name="Baxter E.G."/>
            <person name="Helt G."/>
            <person name="Nelson C.R."/>
            <person name="Miklos G.L.G."/>
            <person name="Abril J.F."/>
            <person name="Agbayani A."/>
            <person name="An H.-J."/>
            <person name="Andrews-Pfannkoch C."/>
            <person name="Baldwin D."/>
            <person name="Ballew R.M."/>
            <person name="Basu A."/>
            <person name="Baxendale J."/>
            <person name="Bayraktaroglu L."/>
            <person name="Beasley E.M."/>
            <person name="Beeson K.Y."/>
            <person name="Benos P.V."/>
            <person name="Berman B.P."/>
            <person name="Bhandari D."/>
            <person name="Bolshakov S."/>
            <person name="Borkova D."/>
            <person name="Botchan M.R."/>
            <person name="Bouck J."/>
            <person name="Brokstein P."/>
            <person name="Brottier P."/>
            <person name="Burtis K.C."/>
            <person name="Busam D.A."/>
            <person name="Butler H."/>
            <person name="Cadieu E."/>
            <person name="Center A."/>
            <person name="Chandra I."/>
            <person name="Cherry J.M."/>
            <person name="Cawley S."/>
            <person name="Dahlke C."/>
            <person name="Davenport L.B."/>
            <person name="Davies P."/>
            <person name="de Pablos B."/>
            <person name="Delcher A."/>
            <person name="Deng Z."/>
            <person name="Mays A.D."/>
            <person name="Dew I."/>
            <person name="Dietz S.M."/>
            <person name="Dodson K."/>
            <person name="Doup L.E."/>
            <person name="Downes M."/>
            <person name="Dugan-Rocha S."/>
            <person name="Dunkov B.C."/>
            <person name="Dunn P."/>
            <person name="Durbin K.J."/>
            <person name="Evangelista C.C."/>
            <person name="Ferraz C."/>
            <person name="Ferriera S."/>
            <person name="Fleischmann W."/>
            <person name="Fosler C."/>
            <person name="Gabrielian A.E."/>
            <person name="Garg N.S."/>
            <person name="Gelbart W.M."/>
            <person name="Glasser K."/>
            <person name="Glodek A."/>
            <person name="Gong F."/>
            <person name="Gorrell J.H."/>
            <person name="Gu Z."/>
            <person name="Guan P."/>
            <person name="Harris M."/>
            <person name="Harris N.L."/>
            <person name="Harvey D.A."/>
            <person name="Heiman T.J."/>
            <person name="Hernandez J.R."/>
            <person name="Houck J."/>
            <person name="Hostin D."/>
            <person name="Houston K.A."/>
            <person name="Howland T.J."/>
            <person name="Wei M.-H."/>
            <person name="Ibegwam C."/>
            <person name="Jalali M."/>
            <person name="Kalush F."/>
            <person name="Karpen G.H."/>
            <person name="Ke Z."/>
            <person name="Kennison J.A."/>
            <person name="Ketchum K.A."/>
            <person name="Kimmel B.E."/>
            <person name="Kodira C.D."/>
            <person name="Kraft C.L."/>
            <person name="Kravitz S."/>
            <person name="Kulp D."/>
            <person name="Lai Z."/>
            <person name="Lasko P."/>
            <person name="Lei Y."/>
            <person name="Levitsky A.A."/>
            <person name="Li J.H."/>
            <person name="Li Z."/>
            <person name="Liang Y."/>
            <person name="Lin X."/>
            <person name="Liu X."/>
            <person name="Mattei B."/>
            <person name="McIntosh T.C."/>
            <person name="McLeod M.P."/>
            <person name="McPherson D."/>
            <person name="Merkulov G."/>
            <person name="Milshina N.V."/>
            <person name="Mobarry C."/>
            <person name="Morris J."/>
            <person name="Moshrefi A."/>
            <person name="Mount S.M."/>
            <person name="Moy M."/>
            <person name="Murphy B."/>
            <person name="Murphy L."/>
            <person name="Muzny D.M."/>
            <person name="Nelson D.L."/>
            <person name="Nelson D.R."/>
            <person name="Nelson K.A."/>
            <person name="Nixon K."/>
            <person name="Nusskern D.R."/>
            <person name="Pacleb J.M."/>
            <person name="Palazzolo M."/>
            <person name="Pittman G.S."/>
            <person name="Pan S."/>
            <person name="Pollard J."/>
            <person name="Puri V."/>
            <person name="Reese M.G."/>
            <person name="Reinert K."/>
            <person name="Remington K."/>
            <person name="Saunders R.D.C."/>
            <person name="Scheeler F."/>
            <person name="Shen H."/>
            <person name="Shue B.C."/>
            <person name="Siden-Kiamos I."/>
            <person name="Simpson M."/>
            <person name="Skupski M.P."/>
            <person name="Smith T.J."/>
            <person name="Spier E."/>
            <person name="Spradling A.C."/>
            <person name="Stapleton M."/>
            <person name="Strong R."/>
            <person name="Sun E."/>
            <person name="Svirskas R."/>
            <person name="Tector C."/>
            <person name="Turner R."/>
            <person name="Venter E."/>
            <person name="Wang A.H."/>
            <person name="Wang X."/>
            <person name="Wang Z.-Y."/>
            <person name="Wassarman D.A."/>
            <person name="Weinstock G.M."/>
            <person name="Weissenbach J."/>
            <person name="Williams S.M."/>
            <person name="Woodage T."/>
            <person name="Worley K.C."/>
            <person name="Wu D."/>
            <person name="Yang S."/>
            <person name="Yao Q.A."/>
            <person name="Ye J."/>
            <person name="Yeh R.-F."/>
            <person name="Zaveri J.S."/>
            <person name="Zhan M."/>
            <person name="Zhang G."/>
            <person name="Zhao Q."/>
            <person name="Zheng L."/>
            <person name="Zheng X.H."/>
            <person name="Zhong F.N."/>
            <person name="Zhong W."/>
            <person name="Zhou X."/>
            <person name="Zhu S.C."/>
            <person name="Zhu X."/>
            <person name="Smith H.O."/>
            <person name="Gibbs R.A."/>
            <person name="Myers E.W."/>
            <person name="Rubin G.M."/>
            <person name="Venter J.C."/>
        </authorList>
    </citation>
    <scope>NUCLEOTIDE SEQUENCE [LARGE SCALE GENOMIC DNA] (ISOFORM LONG)</scope>
    <source>
        <strain>Berkeley</strain>
    </source>
</reference>
<reference key="5">
    <citation type="journal article" date="2002" name="Genome Biol.">
        <title>Annotation of the Drosophila melanogaster euchromatic genome: a systematic review.</title>
        <authorList>
            <person name="Misra S."/>
            <person name="Crosby M.A."/>
            <person name="Mungall C.J."/>
            <person name="Matthews B.B."/>
            <person name="Campbell K.S."/>
            <person name="Hradecky P."/>
            <person name="Huang Y."/>
            <person name="Kaminker J.S."/>
            <person name="Millburn G.H."/>
            <person name="Prochnik S.E."/>
            <person name="Smith C.D."/>
            <person name="Tupy J.L."/>
            <person name="Whitfield E.J."/>
            <person name="Bayraktaroglu L."/>
            <person name="Berman B.P."/>
            <person name="Bettencourt B.R."/>
            <person name="Celniker S.E."/>
            <person name="de Grey A.D.N.J."/>
            <person name="Drysdale R.A."/>
            <person name="Harris N.L."/>
            <person name="Richter J."/>
            <person name="Russo S."/>
            <person name="Schroeder A.J."/>
            <person name="Shu S.Q."/>
            <person name="Stapleton M."/>
            <person name="Yamada C."/>
            <person name="Ashburner M."/>
            <person name="Gelbart W.M."/>
            <person name="Rubin G.M."/>
            <person name="Lewis S.E."/>
        </authorList>
    </citation>
    <scope>GENOME REANNOTATION</scope>
    <source>
        <strain>Berkeley</strain>
    </source>
</reference>
<reference key="6">
    <citation type="journal article" date="1995" name="Proc. Natl. Acad. Sci. U.S.A.">
        <title>Isolation, regulation, and DNA-binding properties of three Drosophila nuclear hormone receptor superfamily members.</title>
        <authorList>
            <person name="Fisk G.J."/>
            <person name="Thummel C.S."/>
        </authorList>
    </citation>
    <scope>NUCLEOTIDE SEQUENCE [MRNA] OF 528-1073</scope>
    <source>
        <strain>Canton-S</strain>
    </source>
</reference>
<keyword id="KW-0002">3D-structure</keyword>
<keyword id="KW-0025">Alternative splicing</keyword>
<keyword id="KW-0217">Developmental protein</keyword>
<keyword id="KW-0238">DNA-binding</keyword>
<keyword id="KW-0479">Metal-binding</keyword>
<keyword id="KW-0539">Nucleus</keyword>
<keyword id="KW-0675">Receptor</keyword>
<keyword id="KW-1185">Reference proteome</keyword>
<keyword id="KW-0804">Transcription</keyword>
<keyword id="KW-0805">Transcription regulation</keyword>
<keyword id="KW-0862">Zinc</keyword>
<keyword id="KW-0863">Zinc-finger</keyword>
<gene>
    <name type="primary">Hr38</name>
    <name type="synonym">NR4A4</name>
    <name type="ORF">CG1864</name>
</gene>
<feature type="chain" id="PRO_0000053725" description="Probable nuclear hormone receptor HR38">
    <location>
        <begin position="1"/>
        <end position="1073"/>
    </location>
</feature>
<feature type="domain" description="NR LBD" evidence="2">
    <location>
        <begin position="840"/>
        <end position="1070"/>
    </location>
</feature>
<feature type="DNA-binding region" description="Nuclear receptor" evidence="1">
    <location>
        <begin position="741"/>
        <end position="816"/>
    </location>
</feature>
<feature type="zinc finger region" description="NR C4-type" evidence="1">
    <location>
        <begin position="744"/>
        <end position="764"/>
    </location>
</feature>
<feature type="zinc finger region" description="NR C4-type" evidence="1">
    <location>
        <begin position="780"/>
        <end position="804"/>
    </location>
</feature>
<feature type="region of interest" description="Disordered" evidence="3">
    <location>
        <begin position="55"/>
        <end position="87"/>
    </location>
</feature>
<feature type="region of interest" description="Disordered" evidence="3">
    <location>
        <begin position="150"/>
        <end position="185"/>
    </location>
</feature>
<feature type="region of interest" description="Disordered" evidence="3">
    <location>
        <begin position="263"/>
        <end position="326"/>
    </location>
</feature>
<feature type="region of interest" description="Disordered" evidence="3">
    <location>
        <begin position="437"/>
        <end position="458"/>
    </location>
</feature>
<feature type="region of interest" description="Disordered" evidence="3">
    <location>
        <begin position="492"/>
        <end position="514"/>
    </location>
</feature>
<feature type="region of interest" description="Disordered" evidence="3">
    <location>
        <begin position="529"/>
        <end position="579"/>
    </location>
</feature>
<feature type="region of interest" description="Disordered" evidence="3">
    <location>
        <begin position="618"/>
        <end position="640"/>
    </location>
</feature>
<feature type="region of interest" description="Disordered" evidence="3">
    <location>
        <begin position="819"/>
        <end position="841"/>
    </location>
</feature>
<feature type="compositionally biased region" description="Low complexity" evidence="3">
    <location>
        <begin position="59"/>
        <end position="82"/>
    </location>
</feature>
<feature type="compositionally biased region" description="Low complexity" evidence="3">
    <location>
        <begin position="175"/>
        <end position="185"/>
    </location>
</feature>
<feature type="compositionally biased region" description="Low complexity" evidence="3">
    <location>
        <begin position="263"/>
        <end position="277"/>
    </location>
</feature>
<feature type="compositionally biased region" description="Basic residues" evidence="3">
    <location>
        <begin position="279"/>
        <end position="291"/>
    </location>
</feature>
<feature type="compositionally biased region" description="Low complexity" evidence="3">
    <location>
        <begin position="292"/>
        <end position="326"/>
    </location>
</feature>
<feature type="compositionally biased region" description="Low complexity" evidence="3">
    <location>
        <begin position="441"/>
        <end position="458"/>
    </location>
</feature>
<feature type="compositionally biased region" description="Low complexity" evidence="3">
    <location>
        <begin position="495"/>
        <end position="514"/>
    </location>
</feature>
<feature type="compositionally biased region" description="Low complexity" evidence="3">
    <location>
        <begin position="619"/>
        <end position="636"/>
    </location>
</feature>
<feature type="splice variant" id="VSP_003714" description="In isoform Short." evidence="5">
    <location>
        <begin position="1"/>
        <end position="522"/>
    </location>
</feature>
<feature type="sequence conflict" description="In Ref. 4; AAF53914." evidence="6" ref="4">
    <original>V</original>
    <variation>VSSPSV</variation>
    <location>
        <position position="667"/>
    </location>
</feature>
<feature type="sequence conflict" description="In Ref. 1 and 3." evidence="6" ref="1 3">
    <original>S</original>
    <variation>L</variation>
    <location>
        <position position="685"/>
    </location>
</feature>
<feature type="sequence conflict" description="In Ref. 2; CAA75690." evidence="6" ref="2">
    <original>STAQ</original>
    <variation>LHGER</variation>
    <location>
        <begin position="689"/>
        <end position="692"/>
    </location>
</feature>
<feature type="sequence conflict" description="In Ref. 2; CAA75690." evidence="6" ref="2">
    <original>A</original>
    <variation>D</variation>
    <location>
        <position position="697"/>
    </location>
</feature>
<feature type="sequence conflict" description="In Ref. 2; CAA75690." evidence="6" ref="2">
    <original>N</original>
    <variation>S</variation>
    <location>
        <position position="702"/>
    </location>
</feature>
<feature type="sequence conflict" description="In Ref. 2; CAA75690." evidence="6" ref="2">
    <original>S</original>
    <variation>R</variation>
    <location>
        <position position="1041"/>
    </location>
</feature>
<feature type="sequence conflict" description="In Ref. 2; CAA75690." evidence="6" ref="2">
    <original>E</original>
    <variation>D</variation>
    <location>
        <position position="1064"/>
    </location>
</feature>
<feature type="helix" evidence="7">
    <location>
        <begin position="844"/>
        <end position="854"/>
    </location>
</feature>
<feature type="helix" evidence="7">
    <location>
        <begin position="859"/>
        <end position="861"/>
    </location>
</feature>
<feature type="turn" evidence="7">
    <location>
        <begin position="865"/>
        <end position="867"/>
    </location>
</feature>
<feature type="helix" evidence="7">
    <location>
        <begin position="874"/>
        <end position="896"/>
    </location>
</feature>
<feature type="helix" evidence="7">
    <location>
        <begin position="902"/>
        <end position="904"/>
    </location>
</feature>
<feature type="helix" evidence="7">
    <location>
        <begin position="907"/>
        <end position="929"/>
    </location>
</feature>
<feature type="strand" evidence="7">
    <location>
        <begin position="935"/>
        <end position="938"/>
    </location>
</feature>
<feature type="strand" evidence="7">
    <location>
        <begin position="942"/>
        <end position="946"/>
    </location>
</feature>
<feature type="helix" evidence="7">
    <location>
        <begin position="947"/>
        <end position="954"/>
    </location>
</feature>
<feature type="helix" evidence="7">
    <location>
        <begin position="957"/>
        <end position="971"/>
    </location>
</feature>
<feature type="helix" evidence="7">
    <location>
        <begin position="975"/>
        <end position="986"/>
    </location>
</feature>
<feature type="helix" evidence="7">
    <location>
        <begin position="996"/>
        <end position="1016"/>
    </location>
</feature>
<feature type="helix" evidence="7">
    <location>
        <begin position="1018"/>
        <end position="1021"/>
    </location>
</feature>
<feature type="helix" evidence="7">
    <location>
        <begin position="1026"/>
        <end position="1031"/>
    </location>
</feature>
<feature type="helix" evidence="7">
    <location>
        <begin position="1033"/>
        <end position="1054"/>
    </location>
</feature>
<feature type="helix" evidence="7">
    <location>
        <begin position="1061"/>
        <end position="1065"/>
    </location>
</feature>
<feature type="turn" evidence="7">
    <location>
        <begin position="1066"/>
        <end position="1068"/>
    </location>
</feature>
<sequence>MMRDRLASLIVVKQEGGSNTSISHHQATAIKCEASLYTESSLFQEINNNSCYRQNLNAPTHQQSHTSHLQHAQQHQTHQQHPLLPPPLPTLPLIYPCRNLFPDGCDINHLACCSSSNSNSNCNSDSNSTSSSPGNSHFFANGNTCAAALTPAPPATEPRKIKPLGAGKLKVGKTDSNSDSNSNCDSRAAAAASTSATSATSATTLAATAAATAAAAEAGGAASAAAAAKISQVRLTNQATTSMLLLQPNSSFSSLSPFDNFSTQTASTTTTTSASAAGHHQHHNHLLHQQHHNQQQQQQQQQQQQQQQQQQQEHLQQQHQQQLVSPQQHLLKSETLLSHEEDQLISNLTDSSVVSHSELFSDLFFPSDSNNSLLSPTTSGYPDNPAEDLTSSIENLTKLTCLRDKRLSSIPEQQLSSEQEQQLCLLSLRSSSDPAIALHAQQQQQQQQQQQQQQQQHQQQQQHLQLQLISPIGGPLSCGSSLPSFQETYSLKYNSSSGSSPQQASSSSTAAPTPTDQVLTLKMDEDCFPPLSGGWSASPPAPSQLQQLHTLQSQAQMSHPNSSNNSSNNAGNSHNNSGGYNYHGHFNAINASANLSPSSSASSLYEYNGVSAADNFYGQQQQQQQQSYQQHNYNSHNGERYSLPTFPTISELAAATAAVEAAAAATVGGPPPVRRASLPVQRTVSPAGSTAQSPKLAKITLNQRHSHAHAHALQLNSAPNSAASSPASADLQAGRLLQAPSQLCAVCGDTAACQHYGVRTCEGCKGFFKRTVQKGSKYVCLADKNCPVDKRRRNRCQFCRFQKCLVVGMVKEVVRTDSLKGRRGRLPSKPKSPQESPPSPPISLITALVRSHVDTTPDPSCLDYSHYEEQSMSEADKVQQFYQLLTSSVDVIKQFAEKIPGYFDLLPEDQELLFQSASLELFVLRLAYRARIDDTKLIFCNGTVLHRTQCLRSFGEWLNDIMEFSRSLHNLEIDISAFACLCALTLITERHGLREPKKVEQLQMKIIGSLRDHVTYNAEAQKKQHYFSRLLGKLPELRSLSVQGLQRIFYLKLEDLVPAPALIENMFVTTLPF</sequence>
<evidence type="ECO:0000255" key="1">
    <source>
        <dbReference type="PROSITE-ProRule" id="PRU00407"/>
    </source>
</evidence>
<evidence type="ECO:0000255" key="2">
    <source>
        <dbReference type="PROSITE-ProRule" id="PRU01189"/>
    </source>
</evidence>
<evidence type="ECO:0000256" key="3">
    <source>
        <dbReference type="SAM" id="MobiDB-lite"/>
    </source>
</evidence>
<evidence type="ECO:0000269" key="4">
    <source>
    </source>
</evidence>
<evidence type="ECO:0000303" key="5">
    <source>
    </source>
</evidence>
<evidence type="ECO:0000305" key="6"/>
<evidence type="ECO:0007829" key="7">
    <source>
        <dbReference type="PDB" id="1PDU"/>
    </source>
</evidence>